<reference key="1">
    <citation type="journal article" date="2008" name="J. Bacteriol.">
        <title>The pangenome structure of Escherichia coli: comparative genomic analysis of E. coli commensal and pathogenic isolates.</title>
        <authorList>
            <person name="Rasko D.A."/>
            <person name="Rosovitz M.J."/>
            <person name="Myers G.S.A."/>
            <person name="Mongodin E.F."/>
            <person name="Fricke W.F."/>
            <person name="Gajer P."/>
            <person name="Crabtree J."/>
            <person name="Sebaihia M."/>
            <person name="Thomson N.R."/>
            <person name="Chaudhuri R."/>
            <person name="Henderson I.R."/>
            <person name="Sperandio V."/>
            <person name="Ravel J."/>
        </authorList>
    </citation>
    <scope>NUCLEOTIDE SEQUENCE [LARGE SCALE GENOMIC DNA]</scope>
    <source>
        <strain>E24377A / ETEC</strain>
    </source>
</reference>
<organism>
    <name type="scientific">Escherichia coli O139:H28 (strain E24377A / ETEC)</name>
    <dbReference type="NCBI Taxonomy" id="331111"/>
    <lineage>
        <taxon>Bacteria</taxon>
        <taxon>Pseudomonadati</taxon>
        <taxon>Pseudomonadota</taxon>
        <taxon>Gammaproteobacteria</taxon>
        <taxon>Enterobacterales</taxon>
        <taxon>Enterobacteriaceae</taxon>
        <taxon>Escherichia</taxon>
    </lineage>
</organism>
<sequence length="457" mass="50387">MALWGGRFTQAADQRFKQFNDSLRFDYRLAEQDIVGSVAWSKALVTVGVLTAEEQAQLEEALNVLLEDVRARPQQILESDAEDIHSWVEGKLIDKVGQLGKKLHTGRSRNDQVATDLKLWCKDTVSELLTANRQLQSALVETAQNNQDAVMPGYTHLQRAQPVTFAHWCLAYVEMLARDESRLQDALKRLDVSPLGCGALAGTAYEIDREQLAGWLGFASATRNSLDSVSDRDHVLELLSAAAIGMVHLSRFAEDLIFFNTGEAGFVELSDRVTSGSSLMPQKKNPDALELIRGKCGRVQGALTGMMMTLKGLPLAYNKDMQEDKEGLFDALDTWLDCLHMAALVLDGIQVKRPRCQEAAQQGYANATELADYLVAKGVPFREAHHIVGEAVVEAIRQGKPLEDLPLDELQKFSPVIDEDVYPILSLQSCLDKRAAKGGVSPQQVAQAIAFAQARLE</sequence>
<accession>A7ZUH8</accession>
<comment type="catalytic activity">
    <reaction evidence="1">
        <text>2-(N(omega)-L-arginino)succinate = fumarate + L-arginine</text>
        <dbReference type="Rhea" id="RHEA:24020"/>
        <dbReference type="ChEBI" id="CHEBI:29806"/>
        <dbReference type="ChEBI" id="CHEBI:32682"/>
        <dbReference type="ChEBI" id="CHEBI:57472"/>
        <dbReference type="EC" id="4.3.2.1"/>
    </reaction>
</comment>
<comment type="pathway">
    <text evidence="1">Amino-acid biosynthesis; L-arginine biosynthesis; L-arginine from L-ornithine and carbamoyl phosphate: step 3/3.</text>
</comment>
<comment type="subcellular location">
    <subcellularLocation>
        <location evidence="1">Cytoplasm</location>
    </subcellularLocation>
</comment>
<comment type="similarity">
    <text evidence="1">Belongs to the lyase 1 family. Argininosuccinate lyase subfamily.</text>
</comment>
<name>ARLY_ECO24</name>
<dbReference type="EC" id="4.3.2.1" evidence="1"/>
<dbReference type="EMBL" id="CP000800">
    <property type="protein sequence ID" value="ABV18690.1"/>
    <property type="molecule type" value="Genomic_DNA"/>
</dbReference>
<dbReference type="RefSeq" id="WP_001230081.1">
    <property type="nucleotide sequence ID" value="NC_009801.1"/>
</dbReference>
<dbReference type="SMR" id="A7ZUH8"/>
<dbReference type="GeneID" id="75203210"/>
<dbReference type="KEGG" id="ecw:EcE24377A_4499"/>
<dbReference type="HOGENOM" id="CLU_027272_2_3_6"/>
<dbReference type="UniPathway" id="UPA00068">
    <property type="reaction ID" value="UER00114"/>
</dbReference>
<dbReference type="Proteomes" id="UP000001122">
    <property type="component" value="Chromosome"/>
</dbReference>
<dbReference type="GO" id="GO:0005829">
    <property type="term" value="C:cytosol"/>
    <property type="evidence" value="ECO:0007669"/>
    <property type="project" value="TreeGrafter"/>
</dbReference>
<dbReference type="GO" id="GO:0004056">
    <property type="term" value="F:argininosuccinate lyase activity"/>
    <property type="evidence" value="ECO:0007669"/>
    <property type="project" value="UniProtKB-UniRule"/>
</dbReference>
<dbReference type="GO" id="GO:0042450">
    <property type="term" value="P:arginine biosynthetic process via ornithine"/>
    <property type="evidence" value="ECO:0007669"/>
    <property type="project" value="InterPro"/>
</dbReference>
<dbReference type="GO" id="GO:0006526">
    <property type="term" value="P:L-arginine biosynthetic process"/>
    <property type="evidence" value="ECO:0007669"/>
    <property type="project" value="UniProtKB-UniRule"/>
</dbReference>
<dbReference type="CDD" id="cd01359">
    <property type="entry name" value="Argininosuccinate_lyase"/>
    <property type="match status" value="1"/>
</dbReference>
<dbReference type="FunFam" id="1.10.275.10:FF:000004">
    <property type="entry name" value="Argininosuccinate lyase"/>
    <property type="match status" value="1"/>
</dbReference>
<dbReference type="FunFam" id="1.10.40.30:FF:000001">
    <property type="entry name" value="Argininosuccinate lyase"/>
    <property type="match status" value="1"/>
</dbReference>
<dbReference type="FunFam" id="1.20.200.10:FF:000006">
    <property type="entry name" value="Argininosuccinate lyase"/>
    <property type="match status" value="1"/>
</dbReference>
<dbReference type="Gene3D" id="1.10.40.30">
    <property type="entry name" value="Fumarase/aspartase (C-terminal domain)"/>
    <property type="match status" value="1"/>
</dbReference>
<dbReference type="Gene3D" id="1.20.200.10">
    <property type="entry name" value="Fumarase/aspartase (Central domain)"/>
    <property type="match status" value="1"/>
</dbReference>
<dbReference type="Gene3D" id="1.10.275.10">
    <property type="entry name" value="Fumarase/aspartase (N-terminal domain)"/>
    <property type="match status" value="1"/>
</dbReference>
<dbReference type="HAMAP" id="MF_00006">
    <property type="entry name" value="Arg_succ_lyase"/>
    <property type="match status" value="1"/>
</dbReference>
<dbReference type="InterPro" id="IPR029419">
    <property type="entry name" value="Arg_succ_lyase_C"/>
</dbReference>
<dbReference type="InterPro" id="IPR009049">
    <property type="entry name" value="Argininosuccinate_lyase"/>
</dbReference>
<dbReference type="InterPro" id="IPR024083">
    <property type="entry name" value="Fumarase/histidase_N"/>
</dbReference>
<dbReference type="InterPro" id="IPR020557">
    <property type="entry name" value="Fumarate_lyase_CS"/>
</dbReference>
<dbReference type="InterPro" id="IPR000362">
    <property type="entry name" value="Fumarate_lyase_fam"/>
</dbReference>
<dbReference type="InterPro" id="IPR022761">
    <property type="entry name" value="Fumarate_lyase_N"/>
</dbReference>
<dbReference type="InterPro" id="IPR008948">
    <property type="entry name" value="L-Aspartase-like"/>
</dbReference>
<dbReference type="NCBIfam" id="TIGR00838">
    <property type="entry name" value="argH"/>
    <property type="match status" value="1"/>
</dbReference>
<dbReference type="NCBIfam" id="NF008964">
    <property type="entry name" value="PRK12308.1"/>
    <property type="match status" value="1"/>
</dbReference>
<dbReference type="PANTHER" id="PTHR43814">
    <property type="entry name" value="ARGININOSUCCINATE LYASE"/>
    <property type="match status" value="1"/>
</dbReference>
<dbReference type="PANTHER" id="PTHR43814:SF1">
    <property type="entry name" value="ARGININOSUCCINATE LYASE"/>
    <property type="match status" value="1"/>
</dbReference>
<dbReference type="Pfam" id="PF14698">
    <property type="entry name" value="ASL_C2"/>
    <property type="match status" value="1"/>
</dbReference>
<dbReference type="Pfam" id="PF00206">
    <property type="entry name" value="Lyase_1"/>
    <property type="match status" value="1"/>
</dbReference>
<dbReference type="PRINTS" id="PR00145">
    <property type="entry name" value="ARGSUCLYASE"/>
</dbReference>
<dbReference type="PRINTS" id="PR00149">
    <property type="entry name" value="FUMRATELYASE"/>
</dbReference>
<dbReference type="SUPFAM" id="SSF48557">
    <property type="entry name" value="L-aspartase-like"/>
    <property type="match status" value="1"/>
</dbReference>
<dbReference type="PROSITE" id="PS00163">
    <property type="entry name" value="FUMARATE_LYASES"/>
    <property type="match status" value="1"/>
</dbReference>
<protein>
    <recommendedName>
        <fullName evidence="1">Argininosuccinate lyase</fullName>
        <shortName evidence="1">ASAL</shortName>
        <ecNumber evidence="1">4.3.2.1</ecNumber>
    </recommendedName>
    <alternativeName>
        <fullName evidence="1">Arginosuccinase</fullName>
    </alternativeName>
</protein>
<gene>
    <name evidence="1" type="primary">argH</name>
    <name type="ordered locus">EcE24377A_4499</name>
</gene>
<evidence type="ECO:0000255" key="1">
    <source>
        <dbReference type="HAMAP-Rule" id="MF_00006"/>
    </source>
</evidence>
<proteinExistence type="inferred from homology"/>
<keyword id="KW-0028">Amino-acid biosynthesis</keyword>
<keyword id="KW-0055">Arginine biosynthesis</keyword>
<keyword id="KW-0963">Cytoplasm</keyword>
<keyword id="KW-0456">Lyase</keyword>
<keyword id="KW-1185">Reference proteome</keyword>
<feature type="chain" id="PRO_1000057048" description="Argininosuccinate lyase">
    <location>
        <begin position="1"/>
        <end position="457"/>
    </location>
</feature>